<organism>
    <name type="scientific">Aquifex aeolicus (strain VF5)</name>
    <dbReference type="NCBI Taxonomy" id="224324"/>
    <lineage>
        <taxon>Bacteria</taxon>
        <taxon>Pseudomonadati</taxon>
        <taxon>Aquificota</taxon>
        <taxon>Aquificia</taxon>
        <taxon>Aquificales</taxon>
        <taxon>Aquificaceae</taxon>
        <taxon>Aquifex</taxon>
    </lineage>
</organism>
<comment type="function">
    <text evidence="1">Catalyzes the attachment of isoleucine to tRNA(Ile). As IleRS can inadvertently accommodate and process structurally similar amino acids such as valine, to avoid such errors it has two additional distinct tRNA(Ile)-dependent editing activities. One activity is designated as 'pretransfer' editing and involves the hydrolysis of activated Val-AMP. The other activity is designated 'posttransfer' editing and involves deacylation of mischarged Val-tRNA(Ile).</text>
</comment>
<comment type="catalytic activity">
    <reaction evidence="1">
        <text>tRNA(Ile) + L-isoleucine + ATP = L-isoleucyl-tRNA(Ile) + AMP + diphosphate</text>
        <dbReference type="Rhea" id="RHEA:11060"/>
        <dbReference type="Rhea" id="RHEA-COMP:9666"/>
        <dbReference type="Rhea" id="RHEA-COMP:9695"/>
        <dbReference type="ChEBI" id="CHEBI:30616"/>
        <dbReference type="ChEBI" id="CHEBI:33019"/>
        <dbReference type="ChEBI" id="CHEBI:58045"/>
        <dbReference type="ChEBI" id="CHEBI:78442"/>
        <dbReference type="ChEBI" id="CHEBI:78528"/>
        <dbReference type="ChEBI" id="CHEBI:456215"/>
        <dbReference type="EC" id="6.1.1.5"/>
    </reaction>
</comment>
<comment type="cofactor">
    <cofactor evidence="1">
        <name>Zn(2+)</name>
        <dbReference type="ChEBI" id="CHEBI:29105"/>
    </cofactor>
    <text evidence="1">Binds 1 zinc ion per subunit.</text>
</comment>
<comment type="subunit">
    <text evidence="1">Monomer.</text>
</comment>
<comment type="subcellular location">
    <subcellularLocation>
        <location evidence="1">Cytoplasm</location>
    </subcellularLocation>
</comment>
<comment type="domain">
    <text evidence="1">IleRS has two distinct active sites: one for aminoacylation and one for editing. The misactivated valine is translocated from the active site to the editing site, which sterically excludes the correctly activated isoleucine. The single editing site contains two valyl binding pockets, one specific for each substrate (Val-AMP or Val-tRNA(Ile)).</text>
</comment>
<comment type="similarity">
    <text evidence="1">Belongs to the class-I aminoacyl-tRNA synthetase family. IleS type 1 subfamily.</text>
</comment>
<dbReference type="EC" id="6.1.1.5" evidence="1"/>
<dbReference type="EMBL" id="AE000657">
    <property type="protein sequence ID" value="AAC06614.1"/>
    <property type="molecule type" value="Genomic_DNA"/>
</dbReference>
<dbReference type="PIR" id="G70327">
    <property type="entry name" value="G70327"/>
</dbReference>
<dbReference type="RefSeq" id="NP_213211.1">
    <property type="nucleotide sequence ID" value="NC_000918.1"/>
</dbReference>
<dbReference type="RefSeq" id="WP_010880149.1">
    <property type="nucleotide sequence ID" value="NC_000918.1"/>
</dbReference>
<dbReference type="SMR" id="O66651"/>
<dbReference type="FunCoup" id="O66651">
    <property type="interactions" value="441"/>
</dbReference>
<dbReference type="STRING" id="224324.aq_305"/>
<dbReference type="EnsemblBacteria" id="AAC06614">
    <property type="protein sequence ID" value="AAC06614"/>
    <property type="gene ID" value="aq_305"/>
</dbReference>
<dbReference type="KEGG" id="aae:aq_305"/>
<dbReference type="PATRIC" id="fig|224324.8.peg.249"/>
<dbReference type="eggNOG" id="COG0060">
    <property type="taxonomic scope" value="Bacteria"/>
</dbReference>
<dbReference type="HOGENOM" id="CLU_001493_7_0_0"/>
<dbReference type="InParanoid" id="O66651"/>
<dbReference type="OrthoDB" id="9810365at2"/>
<dbReference type="Proteomes" id="UP000000798">
    <property type="component" value="Chromosome"/>
</dbReference>
<dbReference type="GO" id="GO:0005829">
    <property type="term" value="C:cytosol"/>
    <property type="evidence" value="ECO:0000318"/>
    <property type="project" value="GO_Central"/>
</dbReference>
<dbReference type="GO" id="GO:0002161">
    <property type="term" value="F:aminoacyl-tRNA deacylase activity"/>
    <property type="evidence" value="ECO:0007669"/>
    <property type="project" value="InterPro"/>
</dbReference>
<dbReference type="GO" id="GO:0005524">
    <property type="term" value="F:ATP binding"/>
    <property type="evidence" value="ECO:0007669"/>
    <property type="project" value="UniProtKB-UniRule"/>
</dbReference>
<dbReference type="GO" id="GO:0004822">
    <property type="term" value="F:isoleucine-tRNA ligase activity"/>
    <property type="evidence" value="ECO:0000318"/>
    <property type="project" value="GO_Central"/>
</dbReference>
<dbReference type="GO" id="GO:0000049">
    <property type="term" value="F:tRNA binding"/>
    <property type="evidence" value="ECO:0007669"/>
    <property type="project" value="InterPro"/>
</dbReference>
<dbReference type="GO" id="GO:0008270">
    <property type="term" value="F:zinc ion binding"/>
    <property type="evidence" value="ECO:0007669"/>
    <property type="project" value="UniProtKB-UniRule"/>
</dbReference>
<dbReference type="GO" id="GO:0006428">
    <property type="term" value="P:isoleucyl-tRNA aminoacylation"/>
    <property type="evidence" value="ECO:0000318"/>
    <property type="project" value="GO_Central"/>
</dbReference>
<dbReference type="CDD" id="cd07960">
    <property type="entry name" value="Anticodon_Ia_Ile_BEm"/>
    <property type="match status" value="1"/>
</dbReference>
<dbReference type="CDD" id="cd00818">
    <property type="entry name" value="IleRS_core"/>
    <property type="match status" value="1"/>
</dbReference>
<dbReference type="FunFam" id="1.10.10.830:FF:000001">
    <property type="entry name" value="Isoleucine--tRNA ligase"/>
    <property type="match status" value="1"/>
</dbReference>
<dbReference type="FunFam" id="3.40.50.620:FF:000092">
    <property type="entry name" value="Isoleucine--tRNA ligase"/>
    <property type="match status" value="1"/>
</dbReference>
<dbReference type="FunFam" id="3.90.740.10:FF:000036">
    <property type="entry name" value="Isoleucyl-tRNA synthetase"/>
    <property type="match status" value="1"/>
</dbReference>
<dbReference type="Gene3D" id="1.10.730.20">
    <property type="match status" value="1"/>
</dbReference>
<dbReference type="Gene3D" id="3.40.50.620">
    <property type="entry name" value="HUPs"/>
    <property type="match status" value="2"/>
</dbReference>
<dbReference type="Gene3D" id="1.10.10.830">
    <property type="entry name" value="Ile-tRNA synthetase CP2 domain-like"/>
    <property type="match status" value="1"/>
</dbReference>
<dbReference type="Gene3D" id="3.90.740.10">
    <property type="entry name" value="Valyl/Leucyl/Isoleucyl-tRNA synthetase, editing domain"/>
    <property type="match status" value="1"/>
</dbReference>
<dbReference type="HAMAP" id="MF_02002">
    <property type="entry name" value="Ile_tRNA_synth_type1"/>
    <property type="match status" value="1"/>
</dbReference>
<dbReference type="InterPro" id="IPR001412">
    <property type="entry name" value="aa-tRNA-synth_I_CS"/>
</dbReference>
<dbReference type="InterPro" id="IPR002300">
    <property type="entry name" value="aa-tRNA-synth_Ia"/>
</dbReference>
<dbReference type="InterPro" id="IPR033708">
    <property type="entry name" value="Anticodon_Ile_BEm"/>
</dbReference>
<dbReference type="InterPro" id="IPR002301">
    <property type="entry name" value="Ile-tRNA-ligase"/>
</dbReference>
<dbReference type="InterPro" id="IPR023585">
    <property type="entry name" value="Ile-tRNA-ligase_type1"/>
</dbReference>
<dbReference type="InterPro" id="IPR050081">
    <property type="entry name" value="Ile-tRNA_ligase"/>
</dbReference>
<dbReference type="InterPro" id="IPR013155">
    <property type="entry name" value="M/V/L/I-tRNA-synth_anticd-bd"/>
</dbReference>
<dbReference type="InterPro" id="IPR014729">
    <property type="entry name" value="Rossmann-like_a/b/a_fold"/>
</dbReference>
<dbReference type="InterPro" id="IPR009080">
    <property type="entry name" value="tRNAsynth_Ia_anticodon-bd"/>
</dbReference>
<dbReference type="InterPro" id="IPR009008">
    <property type="entry name" value="Val/Leu/Ile-tRNA-synth_edit"/>
</dbReference>
<dbReference type="InterPro" id="IPR010663">
    <property type="entry name" value="Znf_FPG/IleRS"/>
</dbReference>
<dbReference type="NCBIfam" id="TIGR00392">
    <property type="entry name" value="ileS"/>
    <property type="match status" value="1"/>
</dbReference>
<dbReference type="PANTHER" id="PTHR42765:SF1">
    <property type="entry name" value="ISOLEUCINE--TRNA LIGASE, MITOCHONDRIAL"/>
    <property type="match status" value="1"/>
</dbReference>
<dbReference type="PANTHER" id="PTHR42765">
    <property type="entry name" value="SOLEUCYL-TRNA SYNTHETASE"/>
    <property type="match status" value="1"/>
</dbReference>
<dbReference type="Pfam" id="PF08264">
    <property type="entry name" value="Anticodon_1"/>
    <property type="match status" value="1"/>
</dbReference>
<dbReference type="Pfam" id="PF00133">
    <property type="entry name" value="tRNA-synt_1"/>
    <property type="match status" value="1"/>
</dbReference>
<dbReference type="Pfam" id="PF06827">
    <property type="entry name" value="zf-FPG_IleRS"/>
    <property type="match status" value="1"/>
</dbReference>
<dbReference type="PRINTS" id="PR00984">
    <property type="entry name" value="TRNASYNTHILE"/>
</dbReference>
<dbReference type="SUPFAM" id="SSF47323">
    <property type="entry name" value="Anticodon-binding domain of a subclass of class I aminoacyl-tRNA synthetases"/>
    <property type="match status" value="1"/>
</dbReference>
<dbReference type="SUPFAM" id="SSF52374">
    <property type="entry name" value="Nucleotidylyl transferase"/>
    <property type="match status" value="1"/>
</dbReference>
<dbReference type="SUPFAM" id="SSF50677">
    <property type="entry name" value="ValRS/IleRS/LeuRS editing domain"/>
    <property type="match status" value="1"/>
</dbReference>
<dbReference type="PROSITE" id="PS00178">
    <property type="entry name" value="AA_TRNA_LIGASE_I"/>
    <property type="match status" value="1"/>
</dbReference>
<keyword id="KW-0030">Aminoacyl-tRNA synthetase</keyword>
<keyword id="KW-0067">ATP-binding</keyword>
<keyword id="KW-0963">Cytoplasm</keyword>
<keyword id="KW-0436">Ligase</keyword>
<keyword id="KW-0479">Metal-binding</keyword>
<keyword id="KW-0547">Nucleotide-binding</keyword>
<keyword id="KW-0648">Protein biosynthesis</keyword>
<keyword id="KW-1185">Reference proteome</keyword>
<keyword id="KW-0862">Zinc</keyword>
<accession>O66651</accession>
<proteinExistence type="inferred from homology"/>
<name>SYI_AQUAE</name>
<protein>
    <recommendedName>
        <fullName evidence="1">Isoleucine--tRNA ligase</fullName>
        <ecNumber evidence="1">6.1.1.5</ecNumber>
    </recommendedName>
    <alternativeName>
        <fullName evidence="1">Isoleucyl-tRNA synthetase</fullName>
        <shortName evidence="1">IleRS</shortName>
    </alternativeName>
</protein>
<sequence length="956" mass="111315">MEEKKVDLKDTLNLPRTEFPMKANLPQREPQILEKWKGLYEKIQKERKGREVFVLHDGPPYANGHIHVGHALNKILKDVINKYNLLIGKNVNFIPGWDCHGLPIERAVEKELSKKKIKKESLPKTEFRELCREYAKKYVNIQREDFVRLGVLGDWEHPYLTMDPKYEAQEIRELGKFFERGLAYRSKKPVYWCIYDKTAEAEAEVEYYEKEDPSIYVKFPLKSGEKFGIKDKKVFAIIWTTTPWTLPANLGIMVKEDADYVLVEVEDEVWIVAKELMDKFFETVNRPEGLVLETVKGKDLVGLEYTHPFVEKEKLKGHLSEETLKNMWKIYPSEFVSLDTGTGLVHMAPGHGQEDYVVGQRYGLEPYAPVSDEGRFVEPAPEFLINVRVFDANHLIVGVLKEKGFLVHEEKIRHSYPHCWRCKNPVIFRATPQWFIGMDIEFFGKTLRQRALEEIEKVKWIPEYGKNRIKSMVENRPDWCISRQRFWGVPITVFYCENCGEIIKDREVFERVAQLVENSEKGSDVWFELTSSQLLPEGYKCPKCGGDSFTKEEDILDVWFDSGCSHAAVIRPLGFQKADLYLEGSDQHRGWFQASLLESVGSYLEAPYKAVLTHGFIVDEKGRKMSKSLGNVISPQEVVKEFGADILRLWVVSEDYTEDVKLGKNLLKKIADDYRKIRNTLRFIIGNLYDFNPRTNALPFEKLHHFDRWIISELQNLLKKVHENYEKFLFYRVHNHIKNFVITTLSAIYLDVLKDRLYVYAPASWERRSAQTALWHLLIALTTSTAPYLSFTAEELWEHVGKLDPSLPESVFLYEMPKPDENLKDEEVLKDYEILLKVRDEVMRALEVARKEKGIIKHPYEAKVYIRGDESVESLLKKYEDYLNFFFTVSQVELREGGEVQIEGEELPVKVGVNKAEGEKCPRCWIYYQKEEFVGCVCKRCAKALSEMGIELNAVC</sequence>
<feature type="chain" id="PRO_0000098341" description="Isoleucine--tRNA ligase">
    <location>
        <begin position="1"/>
        <end position="956"/>
    </location>
</feature>
<feature type="short sequence motif" description="'HIGH' region">
    <location>
        <begin position="60"/>
        <end position="70"/>
    </location>
</feature>
<feature type="short sequence motif" description="'KMSKS' region">
    <location>
        <begin position="624"/>
        <end position="628"/>
    </location>
</feature>
<feature type="binding site" evidence="1">
    <location>
        <position position="583"/>
    </location>
    <ligand>
        <name>L-isoleucyl-5'-AMP</name>
        <dbReference type="ChEBI" id="CHEBI:178002"/>
    </ligand>
</feature>
<feature type="binding site" evidence="1">
    <location>
        <position position="627"/>
    </location>
    <ligand>
        <name>ATP</name>
        <dbReference type="ChEBI" id="CHEBI:30616"/>
    </ligand>
</feature>
<feature type="binding site" evidence="1">
    <location>
        <position position="921"/>
    </location>
    <ligand>
        <name>Zn(2+)</name>
        <dbReference type="ChEBI" id="CHEBI:29105"/>
    </ligand>
</feature>
<feature type="binding site" evidence="1">
    <location>
        <position position="924"/>
    </location>
    <ligand>
        <name>Zn(2+)</name>
        <dbReference type="ChEBI" id="CHEBI:29105"/>
    </ligand>
</feature>
<feature type="binding site" evidence="1">
    <location>
        <position position="938"/>
    </location>
    <ligand>
        <name>Zn(2+)</name>
        <dbReference type="ChEBI" id="CHEBI:29105"/>
    </ligand>
</feature>
<feature type="binding site" evidence="1">
    <location>
        <position position="941"/>
    </location>
    <ligand>
        <name>Zn(2+)</name>
        <dbReference type="ChEBI" id="CHEBI:29105"/>
    </ligand>
</feature>
<reference key="1">
    <citation type="journal article" date="1998" name="Nature">
        <title>The complete genome of the hyperthermophilic bacterium Aquifex aeolicus.</title>
        <authorList>
            <person name="Deckert G."/>
            <person name="Warren P.V."/>
            <person name="Gaasterland T."/>
            <person name="Young W.G."/>
            <person name="Lenox A.L."/>
            <person name="Graham D.E."/>
            <person name="Overbeek R."/>
            <person name="Snead M.A."/>
            <person name="Keller M."/>
            <person name="Aujay M."/>
            <person name="Huber R."/>
            <person name="Feldman R.A."/>
            <person name="Short J.M."/>
            <person name="Olsen G.J."/>
            <person name="Swanson R.V."/>
        </authorList>
    </citation>
    <scope>NUCLEOTIDE SEQUENCE [LARGE SCALE GENOMIC DNA]</scope>
    <source>
        <strain>VF5</strain>
    </source>
</reference>
<evidence type="ECO:0000255" key="1">
    <source>
        <dbReference type="HAMAP-Rule" id="MF_02002"/>
    </source>
</evidence>
<gene>
    <name evidence="1" type="primary">ileS</name>
    <name type="ordered locus">aq_305</name>
</gene>